<feature type="chain" id="PRO_1000089818" description="UPF0758 protein llmg_1515">
    <location>
        <begin position="1"/>
        <end position="227"/>
    </location>
</feature>
<feature type="domain" description="MPN" evidence="1">
    <location>
        <begin position="103"/>
        <end position="225"/>
    </location>
</feature>
<feature type="short sequence motif" description="JAMM motif" evidence="1">
    <location>
        <begin position="174"/>
        <end position="187"/>
    </location>
</feature>
<feature type="binding site" evidence="1">
    <location>
        <position position="174"/>
    </location>
    <ligand>
        <name>Zn(2+)</name>
        <dbReference type="ChEBI" id="CHEBI:29105"/>
        <note>catalytic</note>
    </ligand>
</feature>
<feature type="binding site" evidence="1">
    <location>
        <position position="176"/>
    </location>
    <ligand>
        <name>Zn(2+)</name>
        <dbReference type="ChEBI" id="CHEBI:29105"/>
        <note>catalytic</note>
    </ligand>
</feature>
<feature type="binding site" evidence="1">
    <location>
        <position position="187"/>
    </location>
    <ligand>
        <name>Zn(2+)</name>
        <dbReference type="ChEBI" id="CHEBI:29105"/>
        <note>catalytic</note>
    </ligand>
</feature>
<organism>
    <name type="scientific">Lactococcus lactis subsp. cremoris (strain MG1363)</name>
    <dbReference type="NCBI Taxonomy" id="416870"/>
    <lineage>
        <taxon>Bacteria</taxon>
        <taxon>Bacillati</taxon>
        <taxon>Bacillota</taxon>
        <taxon>Bacilli</taxon>
        <taxon>Lactobacillales</taxon>
        <taxon>Streptococcaceae</taxon>
        <taxon>Lactococcus</taxon>
        <taxon>Lactococcus cremoris subsp. cremoris</taxon>
    </lineage>
</organism>
<sequence length="227" mass="25872">MYELKEKSYPMQPRERLELLGEEYLSDVELLAILLRTGRKKYSSLNLALELLQHFGTLDNFRKASISELKEISGIGQTKAIELRAMIELGKRIQTTTRKRYGQVLSSKEYGMSLAFEMQNFEQEHLTATYLDGQNQIIEKKTIFIGAFNHATASPREILYHAVKNLSVGLLVAHNHPSGNLQPSQADKIFTKKIKNACDNIGINFIDHIIVGAGNYYSFRERDSNLF</sequence>
<gene>
    <name type="ordered locus">llmg_1515</name>
</gene>
<name>Y1515_LACLM</name>
<accession>A2RLC4</accession>
<evidence type="ECO:0000255" key="1">
    <source>
        <dbReference type="PROSITE-ProRule" id="PRU01182"/>
    </source>
</evidence>
<evidence type="ECO:0000305" key="2"/>
<reference key="1">
    <citation type="journal article" date="2007" name="J. Bacteriol.">
        <title>The complete genome sequence of the lactic acid bacterial paradigm Lactococcus lactis subsp. cremoris MG1363.</title>
        <authorList>
            <person name="Wegmann U."/>
            <person name="O'Connell-Motherway M."/>
            <person name="Zomer A."/>
            <person name="Buist G."/>
            <person name="Shearman C."/>
            <person name="Canchaya C."/>
            <person name="Ventura M."/>
            <person name="Goesmann A."/>
            <person name="Gasson M.J."/>
            <person name="Kuipers O.P."/>
            <person name="van Sinderen D."/>
            <person name="Kok J."/>
        </authorList>
    </citation>
    <scope>NUCLEOTIDE SEQUENCE [LARGE SCALE GENOMIC DNA]</scope>
    <source>
        <strain>MG1363</strain>
    </source>
</reference>
<proteinExistence type="inferred from homology"/>
<protein>
    <recommendedName>
        <fullName>UPF0758 protein llmg_1515</fullName>
    </recommendedName>
</protein>
<keyword id="KW-0378">Hydrolase</keyword>
<keyword id="KW-0479">Metal-binding</keyword>
<keyword id="KW-0482">Metalloprotease</keyword>
<keyword id="KW-0645">Protease</keyword>
<keyword id="KW-0862">Zinc</keyword>
<comment type="similarity">
    <text evidence="2">Belongs to the UPF0758 family.</text>
</comment>
<dbReference type="EMBL" id="AM406671">
    <property type="protein sequence ID" value="CAL98091.1"/>
    <property type="molecule type" value="Genomic_DNA"/>
</dbReference>
<dbReference type="RefSeq" id="WP_011835357.1">
    <property type="nucleotide sequence ID" value="NC_009004.1"/>
</dbReference>
<dbReference type="SMR" id="A2RLC4"/>
<dbReference type="STRING" id="416870.llmg_1515"/>
<dbReference type="KEGG" id="llm:llmg_1515"/>
<dbReference type="eggNOG" id="COG2003">
    <property type="taxonomic scope" value="Bacteria"/>
</dbReference>
<dbReference type="HOGENOM" id="CLU_073529_0_2_9"/>
<dbReference type="OrthoDB" id="9804482at2"/>
<dbReference type="PhylomeDB" id="A2RLC4"/>
<dbReference type="Proteomes" id="UP000000364">
    <property type="component" value="Chromosome"/>
</dbReference>
<dbReference type="GO" id="GO:0046872">
    <property type="term" value="F:metal ion binding"/>
    <property type="evidence" value="ECO:0007669"/>
    <property type="project" value="UniProtKB-KW"/>
</dbReference>
<dbReference type="GO" id="GO:0008237">
    <property type="term" value="F:metallopeptidase activity"/>
    <property type="evidence" value="ECO:0007669"/>
    <property type="project" value="UniProtKB-KW"/>
</dbReference>
<dbReference type="GO" id="GO:0006508">
    <property type="term" value="P:proteolysis"/>
    <property type="evidence" value="ECO:0007669"/>
    <property type="project" value="UniProtKB-KW"/>
</dbReference>
<dbReference type="CDD" id="cd08071">
    <property type="entry name" value="MPN_DUF2466"/>
    <property type="match status" value="1"/>
</dbReference>
<dbReference type="Gene3D" id="1.10.150.20">
    <property type="entry name" value="5' to 3' exonuclease, C-terminal subdomain"/>
    <property type="match status" value="1"/>
</dbReference>
<dbReference type="Gene3D" id="3.40.140.10">
    <property type="entry name" value="Cytidine Deaminase, domain 2"/>
    <property type="match status" value="1"/>
</dbReference>
<dbReference type="InterPro" id="IPR037518">
    <property type="entry name" value="MPN"/>
</dbReference>
<dbReference type="InterPro" id="IPR025657">
    <property type="entry name" value="RadC_JAB"/>
</dbReference>
<dbReference type="InterPro" id="IPR010994">
    <property type="entry name" value="RuvA_2-like"/>
</dbReference>
<dbReference type="InterPro" id="IPR001405">
    <property type="entry name" value="UPF0758"/>
</dbReference>
<dbReference type="InterPro" id="IPR020891">
    <property type="entry name" value="UPF0758_CS"/>
</dbReference>
<dbReference type="InterPro" id="IPR046778">
    <property type="entry name" value="UPF0758_N"/>
</dbReference>
<dbReference type="NCBIfam" id="NF000642">
    <property type="entry name" value="PRK00024.1"/>
    <property type="match status" value="1"/>
</dbReference>
<dbReference type="NCBIfam" id="TIGR00608">
    <property type="entry name" value="radc"/>
    <property type="match status" value="1"/>
</dbReference>
<dbReference type="PANTHER" id="PTHR30471">
    <property type="entry name" value="DNA REPAIR PROTEIN RADC"/>
    <property type="match status" value="1"/>
</dbReference>
<dbReference type="PANTHER" id="PTHR30471:SF3">
    <property type="entry name" value="UPF0758 PROTEIN YEES-RELATED"/>
    <property type="match status" value="1"/>
</dbReference>
<dbReference type="Pfam" id="PF04002">
    <property type="entry name" value="RadC"/>
    <property type="match status" value="1"/>
</dbReference>
<dbReference type="Pfam" id="PF20582">
    <property type="entry name" value="UPF0758_N"/>
    <property type="match status" value="1"/>
</dbReference>
<dbReference type="SUPFAM" id="SSF47781">
    <property type="entry name" value="RuvA domain 2-like"/>
    <property type="match status" value="1"/>
</dbReference>
<dbReference type="PROSITE" id="PS50249">
    <property type="entry name" value="MPN"/>
    <property type="match status" value="1"/>
</dbReference>
<dbReference type="PROSITE" id="PS01302">
    <property type="entry name" value="UPF0758"/>
    <property type="match status" value="1"/>
</dbReference>